<gene>
    <name evidence="1" type="primary">hisZ</name>
    <name type="ordered locus">CYB_1100</name>
</gene>
<feature type="chain" id="PRO_0000242864" description="ATP phosphoribosyltransferase regulatory subunit">
    <location>
        <begin position="1"/>
        <end position="434"/>
    </location>
</feature>
<feature type="region of interest" description="Disordered" evidence="2">
    <location>
        <begin position="1"/>
        <end position="48"/>
    </location>
</feature>
<feature type="compositionally biased region" description="Low complexity" evidence="2">
    <location>
        <begin position="27"/>
        <end position="38"/>
    </location>
</feature>
<organism>
    <name type="scientific">Synechococcus sp. (strain JA-2-3B'a(2-13))</name>
    <name type="common">Cyanobacteria bacterium Yellowstone B-Prime</name>
    <dbReference type="NCBI Taxonomy" id="321332"/>
    <lineage>
        <taxon>Bacteria</taxon>
        <taxon>Bacillati</taxon>
        <taxon>Cyanobacteriota</taxon>
        <taxon>Cyanophyceae</taxon>
        <taxon>Synechococcales</taxon>
        <taxon>Synechococcaceae</taxon>
        <taxon>Synechococcus</taxon>
    </lineage>
</organism>
<sequence>MYGRGSGAEHSRGSGAEHFWDPRPEASSTVSSSLRPPSGARDLLPREVQRREKLEAQLTRVFRRHGYQRIITPTLERLETLLAGGSIRAESVLQLRDGEGTMLGLRPEFTASIVRAAATRLAGGPLPLRLYYHGSVFRNSRREEGSYSSQEFFQSGVELIGAGGWLADAEILLLLADCIRSVGISSCEFSWTLLLGDVSLTESLLSAVAPTAQAAVRRAIAQLDYVYLESAPLPEAARQIGLQILGLRGQPGSVLSDLAQLPVPPERLRDLRQLCQVLEEHGVRVVLDLSLLQTLAYYTGIVFQAVASGEIIALGGRYDRLYALYSPQQVEQPGIGFTLLPDTLLRLLPPDPQTEEMGCKRLVVPLVPAGIPAALALAARWREECTAPLTRTEAVELELLDRAPEEIEAYARQCRIPEIAWVQADGSYHITHPG</sequence>
<comment type="function">
    <text evidence="1">Required for the first step of histidine biosynthesis. May allow the feedback regulation of ATP phosphoribosyltransferase activity by histidine.</text>
</comment>
<comment type="pathway">
    <text evidence="1">Amino-acid biosynthesis; L-histidine biosynthesis; L-histidine from 5-phospho-alpha-D-ribose 1-diphosphate: step 1/9.</text>
</comment>
<comment type="subunit">
    <text evidence="1">Heteromultimer composed of HisG and HisZ subunits.</text>
</comment>
<comment type="subcellular location">
    <subcellularLocation>
        <location evidence="1">Cytoplasm</location>
    </subcellularLocation>
</comment>
<comment type="miscellaneous">
    <text>This function is generally fulfilled by the C-terminal part of HisG, which is missing in some bacteria such as this one.</text>
</comment>
<comment type="similarity">
    <text evidence="1">Belongs to the class-II aminoacyl-tRNA synthetase family. HisZ subfamily.</text>
</comment>
<evidence type="ECO:0000255" key="1">
    <source>
        <dbReference type="HAMAP-Rule" id="MF_00125"/>
    </source>
</evidence>
<evidence type="ECO:0000256" key="2">
    <source>
        <dbReference type="SAM" id="MobiDB-lite"/>
    </source>
</evidence>
<dbReference type="EMBL" id="CP000240">
    <property type="protein sequence ID" value="ABD02076.1"/>
    <property type="molecule type" value="Genomic_DNA"/>
</dbReference>
<dbReference type="RefSeq" id="WP_011432729.1">
    <property type="nucleotide sequence ID" value="NC_007776.1"/>
</dbReference>
<dbReference type="SMR" id="Q2JMG5"/>
<dbReference type="STRING" id="321332.CYB_1100"/>
<dbReference type="KEGG" id="cyb:CYB_1100"/>
<dbReference type="eggNOG" id="COG3705">
    <property type="taxonomic scope" value="Bacteria"/>
</dbReference>
<dbReference type="HOGENOM" id="CLU_025113_0_2_3"/>
<dbReference type="OrthoDB" id="9800814at2"/>
<dbReference type="UniPathway" id="UPA00031">
    <property type="reaction ID" value="UER00006"/>
</dbReference>
<dbReference type="Proteomes" id="UP000001938">
    <property type="component" value="Chromosome"/>
</dbReference>
<dbReference type="GO" id="GO:0005737">
    <property type="term" value="C:cytoplasm"/>
    <property type="evidence" value="ECO:0007669"/>
    <property type="project" value="UniProtKB-SubCell"/>
</dbReference>
<dbReference type="GO" id="GO:0004821">
    <property type="term" value="F:histidine-tRNA ligase activity"/>
    <property type="evidence" value="ECO:0007669"/>
    <property type="project" value="TreeGrafter"/>
</dbReference>
<dbReference type="GO" id="GO:0006427">
    <property type="term" value="P:histidyl-tRNA aminoacylation"/>
    <property type="evidence" value="ECO:0007669"/>
    <property type="project" value="TreeGrafter"/>
</dbReference>
<dbReference type="GO" id="GO:0000105">
    <property type="term" value="P:L-histidine biosynthetic process"/>
    <property type="evidence" value="ECO:0007669"/>
    <property type="project" value="UniProtKB-UniRule"/>
</dbReference>
<dbReference type="CDD" id="cd00773">
    <property type="entry name" value="HisRS-like_core"/>
    <property type="match status" value="1"/>
</dbReference>
<dbReference type="Gene3D" id="3.30.930.10">
    <property type="entry name" value="Bira Bifunctional Protein, Domain 2"/>
    <property type="match status" value="1"/>
</dbReference>
<dbReference type="HAMAP" id="MF_00125">
    <property type="entry name" value="HisZ"/>
    <property type="match status" value="1"/>
</dbReference>
<dbReference type="InterPro" id="IPR006195">
    <property type="entry name" value="aa-tRNA-synth_II"/>
</dbReference>
<dbReference type="InterPro" id="IPR045864">
    <property type="entry name" value="aa-tRNA-synth_II/BPL/LPL"/>
</dbReference>
<dbReference type="InterPro" id="IPR041715">
    <property type="entry name" value="HisRS-like_core"/>
</dbReference>
<dbReference type="InterPro" id="IPR004516">
    <property type="entry name" value="HisRS/HisZ"/>
</dbReference>
<dbReference type="InterPro" id="IPR004517">
    <property type="entry name" value="HisZ"/>
</dbReference>
<dbReference type="NCBIfam" id="TIGR00443">
    <property type="entry name" value="hisZ_biosyn_reg"/>
    <property type="match status" value="1"/>
</dbReference>
<dbReference type="NCBIfam" id="NF008940">
    <property type="entry name" value="PRK12292.2-3"/>
    <property type="match status" value="1"/>
</dbReference>
<dbReference type="PANTHER" id="PTHR43707:SF1">
    <property type="entry name" value="HISTIDINE--TRNA LIGASE, MITOCHONDRIAL-RELATED"/>
    <property type="match status" value="1"/>
</dbReference>
<dbReference type="PANTHER" id="PTHR43707">
    <property type="entry name" value="HISTIDYL-TRNA SYNTHETASE"/>
    <property type="match status" value="1"/>
</dbReference>
<dbReference type="Pfam" id="PF13393">
    <property type="entry name" value="tRNA-synt_His"/>
    <property type="match status" value="1"/>
</dbReference>
<dbReference type="PIRSF" id="PIRSF001549">
    <property type="entry name" value="His-tRNA_synth"/>
    <property type="match status" value="1"/>
</dbReference>
<dbReference type="SUPFAM" id="SSF55681">
    <property type="entry name" value="Class II aaRS and biotin synthetases"/>
    <property type="match status" value="1"/>
</dbReference>
<dbReference type="PROSITE" id="PS50862">
    <property type="entry name" value="AA_TRNA_LIGASE_II"/>
    <property type="match status" value="1"/>
</dbReference>
<keyword id="KW-0028">Amino-acid biosynthesis</keyword>
<keyword id="KW-0963">Cytoplasm</keyword>
<keyword id="KW-0368">Histidine biosynthesis</keyword>
<keyword id="KW-1185">Reference proteome</keyword>
<accession>Q2JMG5</accession>
<reference key="1">
    <citation type="journal article" date="2007" name="ISME J.">
        <title>Population level functional diversity in a microbial community revealed by comparative genomic and metagenomic analyses.</title>
        <authorList>
            <person name="Bhaya D."/>
            <person name="Grossman A.R."/>
            <person name="Steunou A.-S."/>
            <person name="Khuri N."/>
            <person name="Cohan F.M."/>
            <person name="Hamamura N."/>
            <person name="Melendrez M.C."/>
            <person name="Bateson M.M."/>
            <person name="Ward D.M."/>
            <person name="Heidelberg J.F."/>
        </authorList>
    </citation>
    <scope>NUCLEOTIDE SEQUENCE [LARGE SCALE GENOMIC DNA]</scope>
    <source>
        <strain>JA-2-3B'a(2-13)</strain>
    </source>
</reference>
<protein>
    <recommendedName>
        <fullName evidence="1">ATP phosphoribosyltransferase regulatory subunit</fullName>
    </recommendedName>
</protein>
<proteinExistence type="inferred from homology"/>
<name>HISZ_SYNJB</name>